<sequence>MNMMQVMQSVVWAVLLWPCLVSLGVPLECKDEQGSIILCASISKEKLLDRVIQHAELIYRVSEESCTLFEEMFVPFPMRSQRNQAGYTCATKAFPIPGSKSEIQQISDKWLLHSVLILVQSWIEPLVYLQTTLDRYDDAPDTLLKKTKWVSEKLLSLEQGVVVLIRKMLDDDMLTTSYYEQGVAPYALQPEVLESVLRDYTLLSCFKKDAHKMETFLKLLKCRQTDKYSCFLH</sequence>
<feature type="signal peptide" evidence="2">
    <location>
        <begin position="1"/>
        <end position="24"/>
    </location>
</feature>
<feature type="chain" id="PRO_0000033071" description="Somatolactin">
    <location>
        <begin position="25"/>
        <end position="233"/>
    </location>
</feature>
<feature type="disulfide bond" evidence="1">
    <location>
        <begin position="29"/>
        <end position="39"/>
    </location>
</feature>
<feature type="disulfide bond" evidence="1">
    <location>
        <begin position="89"/>
        <end position="205"/>
    </location>
</feature>
<feature type="disulfide bond" evidence="1">
    <location>
        <begin position="222"/>
        <end position="230"/>
    </location>
</feature>
<name>SOML_ONCKE</name>
<proteinExistence type="evidence at transcript level"/>
<organism>
    <name type="scientific">Oncorhynchus keta</name>
    <name type="common">Chum salmon</name>
    <name type="synonym">Salmo keta</name>
    <dbReference type="NCBI Taxonomy" id="8018"/>
    <lineage>
        <taxon>Eukaryota</taxon>
        <taxon>Metazoa</taxon>
        <taxon>Chordata</taxon>
        <taxon>Craniata</taxon>
        <taxon>Vertebrata</taxon>
        <taxon>Euteleostomi</taxon>
        <taxon>Actinopterygii</taxon>
        <taxon>Neopterygii</taxon>
        <taxon>Teleostei</taxon>
        <taxon>Protacanthopterygii</taxon>
        <taxon>Salmoniformes</taxon>
        <taxon>Salmonidae</taxon>
        <taxon>Salmoninae</taxon>
        <taxon>Oncorhynchus</taxon>
    </lineage>
</organism>
<evidence type="ECO:0000250" key="1"/>
<evidence type="ECO:0000255" key="2"/>
<evidence type="ECO:0000305" key="3"/>
<reference key="1">
    <citation type="journal article" date="1991" name="Mol. Endocrinol.">
        <title>Gene structure of chum salmon somatolactin, a presumed pituitary hormone of the growth hormone/prolactin family.</title>
        <authorList>
            <person name="Takayama Y."/>
            <person name="Rand-Weaver M."/>
            <person name="Kawauchi H."/>
            <person name="Ono M."/>
        </authorList>
    </citation>
    <scope>NUCLEOTIDE SEQUENCE</scope>
</reference>
<reference key="2">
    <citation type="journal article" date="1991" name="Gen. Comp. Endocrinol.">
        <title>Greater conservation of somatolactin, a presumed pituitary hormone of the growth hormone/prolactin family, than of growth hormone in teleost fish.</title>
        <authorList>
            <person name="Takayama Y."/>
            <person name="Ono M."/>
            <person name="Rand-Weaver M."/>
            <person name="Kawauchi H."/>
        </authorList>
    </citation>
    <scope>NUCLEOTIDE SEQUENCE [MRNA]</scope>
</reference>
<accession>P24405</accession>
<comment type="function">
    <text>May be associated with ion regulation and reproduction.</text>
</comment>
<comment type="subcellular location">
    <subcellularLocation>
        <location>Secreted</location>
    </subcellularLocation>
</comment>
<comment type="tissue specificity">
    <text>Pituitary gland.</text>
</comment>
<comment type="similarity">
    <text evidence="3">Belongs to the somatotropin/prolactin family.</text>
</comment>
<dbReference type="EMBL" id="D10640">
    <property type="protein sequence ID" value="BAA01487.1"/>
    <property type="molecule type" value="mRNA"/>
</dbReference>
<dbReference type="EMBL" id="D10638">
    <property type="protein sequence ID" value="BAA01485.1"/>
    <property type="molecule type" value="Genomic_DNA"/>
</dbReference>
<dbReference type="PIR" id="A23729">
    <property type="entry name" value="A23729"/>
</dbReference>
<dbReference type="RefSeq" id="XP_035648274.1">
    <property type="nucleotide sequence ID" value="XM_035792381.2"/>
</dbReference>
<dbReference type="SMR" id="P24405"/>
<dbReference type="GeneID" id="118397521"/>
<dbReference type="OrthoDB" id="9945472at2759"/>
<dbReference type="GO" id="GO:0005615">
    <property type="term" value="C:extracellular space"/>
    <property type="evidence" value="ECO:0007669"/>
    <property type="project" value="TreeGrafter"/>
</dbReference>
<dbReference type="GO" id="GO:0070186">
    <property type="term" value="F:growth hormone activity"/>
    <property type="evidence" value="ECO:0007669"/>
    <property type="project" value="TreeGrafter"/>
</dbReference>
<dbReference type="GO" id="GO:0005131">
    <property type="term" value="F:growth hormone receptor binding"/>
    <property type="evidence" value="ECO:0007669"/>
    <property type="project" value="TreeGrafter"/>
</dbReference>
<dbReference type="GO" id="GO:0048513">
    <property type="term" value="P:animal organ development"/>
    <property type="evidence" value="ECO:0007669"/>
    <property type="project" value="TreeGrafter"/>
</dbReference>
<dbReference type="GO" id="GO:0060396">
    <property type="term" value="P:growth hormone receptor signaling pathway"/>
    <property type="evidence" value="ECO:0007669"/>
    <property type="project" value="TreeGrafter"/>
</dbReference>
<dbReference type="GO" id="GO:0045927">
    <property type="term" value="P:positive regulation of growth"/>
    <property type="evidence" value="ECO:0007669"/>
    <property type="project" value="TreeGrafter"/>
</dbReference>
<dbReference type="GO" id="GO:0046427">
    <property type="term" value="P:positive regulation of receptor signaling pathway via JAK-STAT"/>
    <property type="evidence" value="ECO:0007669"/>
    <property type="project" value="TreeGrafter"/>
</dbReference>
<dbReference type="GO" id="GO:0031667">
    <property type="term" value="P:response to nutrient levels"/>
    <property type="evidence" value="ECO:0007669"/>
    <property type="project" value="TreeGrafter"/>
</dbReference>
<dbReference type="FunFam" id="1.20.1250.10:FF:000042">
    <property type="entry name" value="Somatolactin alpha"/>
    <property type="match status" value="1"/>
</dbReference>
<dbReference type="Gene3D" id="1.20.1250.10">
    <property type="match status" value="1"/>
</dbReference>
<dbReference type="InterPro" id="IPR009079">
    <property type="entry name" value="4_helix_cytokine-like_core"/>
</dbReference>
<dbReference type="InterPro" id="IPR001400">
    <property type="entry name" value="Somatotropin/Prolactin"/>
</dbReference>
<dbReference type="InterPro" id="IPR018116">
    <property type="entry name" value="Somatotropin_CS"/>
</dbReference>
<dbReference type="PANTHER" id="PTHR11417:SF3">
    <property type="entry name" value="SOMATOLACTIN ALPHA ISOFORM X1-RELATED"/>
    <property type="match status" value="1"/>
</dbReference>
<dbReference type="PANTHER" id="PTHR11417">
    <property type="entry name" value="SOMATOTROPIN,PROLACTIN"/>
    <property type="match status" value="1"/>
</dbReference>
<dbReference type="Pfam" id="PF00103">
    <property type="entry name" value="Hormone_1"/>
    <property type="match status" value="1"/>
</dbReference>
<dbReference type="PRINTS" id="PR00836">
    <property type="entry name" value="SOMATOTROPIN"/>
</dbReference>
<dbReference type="SUPFAM" id="SSF47266">
    <property type="entry name" value="4-helical cytokines"/>
    <property type="match status" value="1"/>
</dbReference>
<dbReference type="PROSITE" id="PS00266">
    <property type="entry name" value="SOMATOTROPIN_1"/>
    <property type="match status" value="1"/>
</dbReference>
<dbReference type="PROSITE" id="PS00338">
    <property type="entry name" value="SOMATOTROPIN_2"/>
    <property type="match status" value="1"/>
</dbReference>
<protein>
    <recommendedName>
        <fullName>Somatolactin</fullName>
        <shortName>SL</shortName>
    </recommendedName>
</protein>
<keyword id="KW-1015">Disulfide bond</keyword>
<keyword id="KW-0372">Hormone</keyword>
<keyword id="KW-0964">Secreted</keyword>
<keyword id="KW-0732">Signal</keyword>